<dbReference type="EC" id="3.1.26.4" evidence="1"/>
<dbReference type="EMBL" id="CP000377">
    <property type="protein sequence ID" value="ABF65305.1"/>
    <property type="molecule type" value="Genomic_DNA"/>
</dbReference>
<dbReference type="RefSeq" id="WP_011539888.1">
    <property type="nucleotide sequence ID" value="NC_008044.1"/>
</dbReference>
<dbReference type="SMR" id="Q1GDG1"/>
<dbReference type="STRING" id="292414.TM1040_2573"/>
<dbReference type="KEGG" id="sit:TM1040_2573"/>
<dbReference type="eggNOG" id="COG0328">
    <property type="taxonomic scope" value="Bacteria"/>
</dbReference>
<dbReference type="HOGENOM" id="CLU_030894_6_0_5"/>
<dbReference type="OrthoDB" id="7845843at2"/>
<dbReference type="Proteomes" id="UP000000636">
    <property type="component" value="Chromosome"/>
</dbReference>
<dbReference type="GO" id="GO:0005737">
    <property type="term" value="C:cytoplasm"/>
    <property type="evidence" value="ECO:0007669"/>
    <property type="project" value="UniProtKB-SubCell"/>
</dbReference>
<dbReference type="GO" id="GO:0000287">
    <property type="term" value="F:magnesium ion binding"/>
    <property type="evidence" value="ECO:0007669"/>
    <property type="project" value="UniProtKB-UniRule"/>
</dbReference>
<dbReference type="GO" id="GO:0003676">
    <property type="term" value="F:nucleic acid binding"/>
    <property type="evidence" value="ECO:0007669"/>
    <property type="project" value="InterPro"/>
</dbReference>
<dbReference type="GO" id="GO:0004523">
    <property type="term" value="F:RNA-DNA hybrid ribonuclease activity"/>
    <property type="evidence" value="ECO:0007669"/>
    <property type="project" value="UniProtKB-UniRule"/>
</dbReference>
<dbReference type="GO" id="GO:0043137">
    <property type="term" value="P:DNA replication, removal of RNA primer"/>
    <property type="evidence" value="ECO:0007669"/>
    <property type="project" value="TreeGrafter"/>
</dbReference>
<dbReference type="CDD" id="cd09278">
    <property type="entry name" value="RNase_HI_prokaryote_like"/>
    <property type="match status" value="1"/>
</dbReference>
<dbReference type="FunFam" id="3.30.420.10:FF:000089">
    <property type="entry name" value="Ribonuclease H"/>
    <property type="match status" value="1"/>
</dbReference>
<dbReference type="Gene3D" id="3.30.420.10">
    <property type="entry name" value="Ribonuclease H-like superfamily/Ribonuclease H"/>
    <property type="match status" value="1"/>
</dbReference>
<dbReference type="HAMAP" id="MF_00042">
    <property type="entry name" value="RNase_H"/>
    <property type="match status" value="1"/>
</dbReference>
<dbReference type="InterPro" id="IPR050092">
    <property type="entry name" value="RNase_H"/>
</dbReference>
<dbReference type="InterPro" id="IPR012337">
    <property type="entry name" value="RNaseH-like_sf"/>
</dbReference>
<dbReference type="InterPro" id="IPR002156">
    <property type="entry name" value="RNaseH_domain"/>
</dbReference>
<dbReference type="InterPro" id="IPR036397">
    <property type="entry name" value="RNaseH_sf"/>
</dbReference>
<dbReference type="InterPro" id="IPR022892">
    <property type="entry name" value="RNaseHI"/>
</dbReference>
<dbReference type="NCBIfam" id="NF001236">
    <property type="entry name" value="PRK00203.1"/>
    <property type="match status" value="1"/>
</dbReference>
<dbReference type="PANTHER" id="PTHR10642">
    <property type="entry name" value="RIBONUCLEASE H1"/>
    <property type="match status" value="1"/>
</dbReference>
<dbReference type="PANTHER" id="PTHR10642:SF26">
    <property type="entry name" value="RIBONUCLEASE H1"/>
    <property type="match status" value="1"/>
</dbReference>
<dbReference type="Pfam" id="PF00075">
    <property type="entry name" value="RNase_H"/>
    <property type="match status" value="1"/>
</dbReference>
<dbReference type="SUPFAM" id="SSF53098">
    <property type="entry name" value="Ribonuclease H-like"/>
    <property type="match status" value="1"/>
</dbReference>
<dbReference type="PROSITE" id="PS50879">
    <property type="entry name" value="RNASE_H_1"/>
    <property type="match status" value="1"/>
</dbReference>
<reference key="1">
    <citation type="submission" date="2006-05" db="EMBL/GenBank/DDBJ databases">
        <title>Complete sequence of chromosome of Silicibacter sp. TM1040.</title>
        <authorList>
            <consortium name="US DOE Joint Genome Institute"/>
            <person name="Copeland A."/>
            <person name="Lucas S."/>
            <person name="Lapidus A."/>
            <person name="Barry K."/>
            <person name="Detter J.C."/>
            <person name="Glavina del Rio T."/>
            <person name="Hammon N."/>
            <person name="Israni S."/>
            <person name="Dalin E."/>
            <person name="Tice H."/>
            <person name="Pitluck S."/>
            <person name="Brettin T."/>
            <person name="Bruce D."/>
            <person name="Han C."/>
            <person name="Tapia R."/>
            <person name="Goodwin L."/>
            <person name="Thompson L.S."/>
            <person name="Gilna P."/>
            <person name="Schmutz J."/>
            <person name="Larimer F."/>
            <person name="Land M."/>
            <person name="Hauser L."/>
            <person name="Kyrpides N."/>
            <person name="Kim E."/>
            <person name="Belas R."/>
            <person name="Moran M.A."/>
            <person name="Buchan A."/>
            <person name="Gonzalez J.M."/>
            <person name="Schell M.A."/>
            <person name="Sun F."/>
            <person name="Richardson P."/>
        </authorList>
    </citation>
    <scope>NUCLEOTIDE SEQUENCE [LARGE SCALE GENOMIC DNA]</scope>
    <source>
        <strain>TM1040</strain>
    </source>
</reference>
<name>RNH_RUEST</name>
<protein>
    <recommendedName>
        <fullName evidence="1">Ribonuclease H</fullName>
        <shortName evidence="1">RNase H</shortName>
        <ecNumber evidence="1">3.1.26.4</ecNumber>
    </recommendedName>
</protein>
<comment type="function">
    <text evidence="1">Endonuclease that specifically degrades the RNA of RNA-DNA hybrids.</text>
</comment>
<comment type="catalytic activity">
    <reaction evidence="1">
        <text>Endonucleolytic cleavage to 5'-phosphomonoester.</text>
        <dbReference type="EC" id="3.1.26.4"/>
    </reaction>
</comment>
<comment type="cofactor">
    <cofactor evidence="1">
        <name>Mg(2+)</name>
        <dbReference type="ChEBI" id="CHEBI:18420"/>
    </cofactor>
    <text evidence="1">Binds 1 Mg(2+) ion per subunit. May bind a second metal ion at a regulatory site, or after substrate binding.</text>
</comment>
<comment type="subunit">
    <text evidence="1">Monomer.</text>
</comment>
<comment type="subcellular location">
    <subcellularLocation>
        <location evidence="1">Cytoplasm</location>
    </subcellularLocation>
</comment>
<comment type="similarity">
    <text evidence="1">Belongs to the RNase H family.</text>
</comment>
<organism>
    <name type="scientific">Ruegeria sp. (strain TM1040)</name>
    <name type="common">Silicibacter sp.</name>
    <dbReference type="NCBI Taxonomy" id="292414"/>
    <lineage>
        <taxon>Bacteria</taxon>
        <taxon>Pseudomonadati</taxon>
        <taxon>Pseudomonadota</taxon>
        <taxon>Alphaproteobacteria</taxon>
        <taxon>Rhodobacterales</taxon>
        <taxon>Roseobacteraceae</taxon>
        <taxon>Ruegeria</taxon>
    </lineage>
</organism>
<evidence type="ECO:0000255" key="1">
    <source>
        <dbReference type="HAMAP-Rule" id="MF_00042"/>
    </source>
</evidence>
<evidence type="ECO:0000255" key="2">
    <source>
        <dbReference type="PROSITE-ProRule" id="PRU00408"/>
    </source>
</evidence>
<gene>
    <name evidence="1" type="primary">rnhA</name>
    <name type="ordered locus">TM1040_2573</name>
</gene>
<accession>Q1GDG1</accession>
<keyword id="KW-0963">Cytoplasm</keyword>
<keyword id="KW-0255">Endonuclease</keyword>
<keyword id="KW-0378">Hydrolase</keyword>
<keyword id="KW-0460">Magnesium</keyword>
<keyword id="KW-0479">Metal-binding</keyword>
<keyword id="KW-0540">Nuclease</keyword>
<keyword id="KW-1185">Reference proteome</keyword>
<sequence>MPDLFAYTDGACSGNPGPGGWGALLRAMDGETVLKERELKGGEKETTNNRMELLAAIHALESLARPSKITVVTDSAYVKNGVTGWIFGWKKNGWKTSAKKPVKNVELWQRLDAAQSRHDVTWEWVKGHAGHPENERADELARAGMAPFKSSGKSSKG</sequence>
<proteinExistence type="inferred from homology"/>
<feature type="chain" id="PRO_0000332676" description="Ribonuclease H">
    <location>
        <begin position="1"/>
        <end position="157"/>
    </location>
</feature>
<feature type="domain" description="RNase H type-1" evidence="2">
    <location>
        <begin position="1"/>
        <end position="146"/>
    </location>
</feature>
<feature type="binding site" evidence="1">
    <location>
        <position position="9"/>
    </location>
    <ligand>
        <name>Mg(2+)</name>
        <dbReference type="ChEBI" id="CHEBI:18420"/>
        <label>1</label>
    </ligand>
</feature>
<feature type="binding site" evidence="1">
    <location>
        <position position="9"/>
    </location>
    <ligand>
        <name>Mg(2+)</name>
        <dbReference type="ChEBI" id="CHEBI:18420"/>
        <label>2</label>
    </ligand>
</feature>
<feature type="binding site" evidence="1">
    <location>
        <position position="52"/>
    </location>
    <ligand>
        <name>Mg(2+)</name>
        <dbReference type="ChEBI" id="CHEBI:18420"/>
        <label>1</label>
    </ligand>
</feature>
<feature type="binding site" evidence="1">
    <location>
        <position position="74"/>
    </location>
    <ligand>
        <name>Mg(2+)</name>
        <dbReference type="ChEBI" id="CHEBI:18420"/>
        <label>1</label>
    </ligand>
</feature>
<feature type="binding site" evidence="1">
    <location>
        <position position="138"/>
    </location>
    <ligand>
        <name>Mg(2+)</name>
        <dbReference type="ChEBI" id="CHEBI:18420"/>
        <label>2</label>
    </ligand>
</feature>